<name>RS5_BOVIN</name>
<feature type="chain" id="PRO_0000124525" description="Small ribosomal subunit protein uS7">
    <location>
        <begin position="1"/>
        <end position="204"/>
    </location>
</feature>
<feature type="initiator methionine" description="Removed; alternate" evidence="1">
    <location>
        <position position="1"/>
    </location>
</feature>
<feature type="chain" id="PRO_0000370368" description="Small ribosomal subunit protein uS7, N-terminally processed">
    <location>
        <begin position="2"/>
        <end position="204"/>
    </location>
</feature>
<feature type="modified residue" description="N-acetylmethionine" evidence="1">
    <location>
        <position position="1"/>
    </location>
</feature>
<feature type="modified residue" description="N-acetylthreonine; in 40S ribosomal protein S5, N-terminally processed" evidence="1">
    <location>
        <position position="2"/>
    </location>
</feature>
<feature type="modified residue" description="Phosphothreonine" evidence="1">
    <location>
        <position position="14"/>
    </location>
</feature>
<feature type="modified residue" description="N6-acetyllysine; alternate" evidence="1">
    <location>
        <position position="47"/>
    </location>
</feature>
<feature type="modified residue" description="Phosphoserine" evidence="1">
    <location>
        <position position="142"/>
    </location>
</feature>
<feature type="cross-link" description="Glycyl lysine isopeptide (Lys-Gly) (interchain with G-Cter in SUMO2); alternate" evidence="1">
    <location>
        <position position="47"/>
    </location>
</feature>
<reference key="1">
    <citation type="journal article" date="2005" name="BMC Genomics">
        <title>Characterization of 954 bovine full-CDS cDNA sequences.</title>
        <authorList>
            <person name="Harhay G.P."/>
            <person name="Sonstegard T.S."/>
            <person name="Keele J.W."/>
            <person name="Heaton M.P."/>
            <person name="Clawson M.L."/>
            <person name="Snelling W.M."/>
            <person name="Wiedmann R.T."/>
            <person name="Van Tassell C.P."/>
            <person name="Smith T.P.L."/>
        </authorList>
    </citation>
    <scope>NUCLEOTIDE SEQUENCE [LARGE SCALE MRNA]</scope>
</reference>
<reference key="2">
    <citation type="submission" date="2005-08" db="EMBL/GenBank/DDBJ databases">
        <authorList>
            <consortium name="NIH - Mammalian Gene Collection (MGC) project"/>
        </authorList>
    </citation>
    <scope>NUCLEOTIDE SEQUENCE [LARGE SCALE MRNA]</scope>
    <source>
        <strain>Crossbred X Angus</strain>
        <tissue>Ileum</tissue>
    </source>
</reference>
<accession>Q5E988</accession>
<accession>Q3T0I8</accession>
<keyword id="KW-0007">Acetylation</keyword>
<keyword id="KW-0963">Cytoplasm</keyword>
<keyword id="KW-1017">Isopeptide bond</keyword>
<keyword id="KW-0539">Nucleus</keyword>
<keyword id="KW-0597">Phosphoprotein</keyword>
<keyword id="KW-1185">Reference proteome</keyword>
<keyword id="KW-0687">Ribonucleoprotein</keyword>
<keyword id="KW-0689">Ribosomal protein</keyword>
<keyword id="KW-0832">Ubl conjugation</keyword>
<comment type="function">
    <text evidence="1">Component of the small ribosomal subunit. The ribosome is a large ribonucleoprotein complex responsible for the synthesis of proteins in the cell. Part of the small subunit (SSU) processome, first precursor of the small eukaryotic ribosomal subunit. During the assembly of the SSU processome in the nucleolus, many ribosome biogenesis factors, an RNA chaperone and ribosomal proteins associate with the nascent pre-rRNA and work in concert to generate RNA folding, modifications, rearrangements and cleavage as well as targeted degradation of pre-ribosomal RNA by the RNA exosome.</text>
</comment>
<comment type="subunit">
    <text evidence="1">Component of the small ribosomal subunit. Part of the small subunit (SSU) processome, composed of more than 70 proteins and the RNA chaperone small nucleolar RNA (snoRNA) U3.</text>
</comment>
<comment type="subcellular location">
    <subcellularLocation>
        <location evidence="1">Cytoplasm</location>
    </subcellularLocation>
    <subcellularLocation>
        <location evidence="1">Nucleus</location>
        <location evidence="1">Nucleolus</location>
    </subcellularLocation>
</comment>
<comment type="similarity">
    <text evidence="2">Belongs to the universal ribosomal protein uS7 family.</text>
</comment>
<evidence type="ECO:0000250" key="1">
    <source>
        <dbReference type="UniProtKB" id="P46782"/>
    </source>
</evidence>
<evidence type="ECO:0000305" key="2"/>
<sequence>MTEWETAAPAVAETPDIKLFGKWSTDDVQINDISLQDYIAVKEKYAKYLPHSAGRYAAKRFRKAQCPIVERLTNSMMMHGRNNGKKLMTVRIVKHAFEIIHLLTGENPLQVLVNAIINSGPREDSTRIGRAGTVRRQAVDVSPLRRVNQAIWLLCTGAREAAFRNIKTIAECLADELINAAKGSSNSYAIKKKDELERVAKSNR</sequence>
<gene>
    <name type="primary">RPS5</name>
</gene>
<protein>
    <recommendedName>
        <fullName evidence="2">Small ribosomal subunit protein uS7</fullName>
    </recommendedName>
    <alternativeName>
        <fullName>40S ribosomal protein S5</fullName>
    </alternativeName>
    <component>
        <recommendedName>
            <fullName>Small ribosomal subunit protein uS7, N-terminally processed</fullName>
        </recommendedName>
    </component>
</protein>
<dbReference type="EMBL" id="BT021032">
    <property type="protein sequence ID" value="AAX09049.1"/>
    <property type="molecule type" value="mRNA"/>
</dbReference>
<dbReference type="EMBL" id="BC102374">
    <property type="protein sequence ID" value="AAI02375.1"/>
    <property type="molecule type" value="mRNA"/>
</dbReference>
<dbReference type="RefSeq" id="NP_001015531.1">
    <property type="nucleotide sequence ID" value="NM_001015531.1"/>
</dbReference>
<dbReference type="SMR" id="Q5E988"/>
<dbReference type="FunCoup" id="Q5E988">
    <property type="interactions" value="3048"/>
</dbReference>
<dbReference type="STRING" id="9913.ENSBTAP00000021268"/>
<dbReference type="PaxDb" id="9913-ENSBTAP00000021268"/>
<dbReference type="PeptideAtlas" id="Q5E988"/>
<dbReference type="Ensembl" id="ENSBTAT00000021268.5">
    <property type="protein sequence ID" value="ENSBTAP00000021268.3"/>
    <property type="gene ID" value="ENSBTAG00000015989.5"/>
</dbReference>
<dbReference type="GeneID" id="506229"/>
<dbReference type="KEGG" id="bta:506229"/>
<dbReference type="CTD" id="6193"/>
<dbReference type="VEuPathDB" id="HostDB:ENSBTAG00000015989"/>
<dbReference type="VGNC" id="VGNC:34139">
    <property type="gene designation" value="RPS5"/>
</dbReference>
<dbReference type="eggNOG" id="KOG3291">
    <property type="taxonomic scope" value="Eukaryota"/>
</dbReference>
<dbReference type="GeneTree" id="ENSGT00390000010806"/>
<dbReference type="HOGENOM" id="CLU_063975_0_0_1"/>
<dbReference type="InParanoid" id="Q5E988"/>
<dbReference type="OMA" id="KMNIVER"/>
<dbReference type="OrthoDB" id="10264639at2759"/>
<dbReference type="TreeFam" id="TF300872"/>
<dbReference type="Reactome" id="R-BTA-156827">
    <property type="pathway name" value="L13a-mediated translational silencing of Ceruloplasmin expression"/>
</dbReference>
<dbReference type="Reactome" id="R-BTA-1799339">
    <property type="pathway name" value="SRP-dependent cotranslational protein targeting to membrane"/>
</dbReference>
<dbReference type="Reactome" id="R-BTA-6791226">
    <property type="pathway name" value="Major pathway of rRNA processing in the nucleolus and cytosol"/>
</dbReference>
<dbReference type="Reactome" id="R-BTA-72649">
    <property type="pathway name" value="Translation initiation complex formation"/>
</dbReference>
<dbReference type="Reactome" id="R-BTA-72689">
    <property type="pathway name" value="Formation of a pool of free 40S subunits"/>
</dbReference>
<dbReference type="Reactome" id="R-BTA-72695">
    <property type="pathway name" value="Formation of the ternary complex, and subsequently, the 43S complex"/>
</dbReference>
<dbReference type="Reactome" id="R-BTA-72702">
    <property type="pathway name" value="Ribosomal scanning and start codon recognition"/>
</dbReference>
<dbReference type="Reactome" id="R-BTA-72706">
    <property type="pathway name" value="GTP hydrolysis and joining of the 60S ribosomal subunit"/>
</dbReference>
<dbReference type="Reactome" id="R-BTA-975956">
    <property type="pathway name" value="Nonsense Mediated Decay (NMD) independent of the Exon Junction Complex (EJC)"/>
</dbReference>
<dbReference type="Reactome" id="R-BTA-975957">
    <property type="pathway name" value="Nonsense Mediated Decay (NMD) enhanced by the Exon Junction Complex (EJC)"/>
</dbReference>
<dbReference type="CD-CODE" id="D7FE2080">
    <property type="entry name" value="Nucleolus"/>
</dbReference>
<dbReference type="Proteomes" id="UP000009136">
    <property type="component" value="Chromosome 18"/>
</dbReference>
<dbReference type="Bgee" id="ENSBTAG00000015989">
    <property type="expression patterns" value="Expressed in isthmus of fallopian tube and 111 other cell types or tissues"/>
</dbReference>
<dbReference type="GO" id="GO:0022627">
    <property type="term" value="C:cytosolic small ribosomal subunit"/>
    <property type="evidence" value="ECO:0000250"/>
    <property type="project" value="UniProtKB"/>
</dbReference>
<dbReference type="GO" id="GO:0005730">
    <property type="term" value="C:nucleolus"/>
    <property type="evidence" value="ECO:0007669"/>
    <property type="project" value="UniProtKB-SubCell"/>
</dbReference>
<dbReference type="GO" id="GO:0005840">
    <property type="term" value="C:ribosome"/>
    <property type="evidence" value="ECO:0000318"/>
    <property type="project" value="GO_Central"/>
</dbReference>
<dbReference type="GO" id="GO:0032040">
    <property type="term" value="C:small-subunit processome"/>
    <property type="evidence" value="ECO:0000250"/>
    <property type="project" value="UniProtKB"/>
</dbReference>
<dbReference type="GO" id="GO:0003729">
    <property type="term" value="F:mRNA binding"/>
    <property type="evidence" value="ECO:0000318"/>
    <property type="project" value="GO_Central"/>
</dbReference>
<dbReference type="GO" id="GO:0019843">
    <property type="term" value="F:rRNA binding"/>
    <property type="evidence" value="ECO:0000318"/>
    <property type="project" value="GO_Central"/>
</dbReference>
<dbReference type="GO" id="GO:0003735">
    <property type="term" value="F:structural constituent of ribosome"/>
    <property type="evidence" value="ECO:0000318"/>
    <property type="project" value="GO_Central"/>
</dbReference>
<dbReference type="GO" id="GO:0000028">
    <property type="term" value="P:ribosomal small subunit assembly"/>
    <property type="evidence" value="ECO:0000318"/>
    <property type="project" value="GO_Central"/>
</dbReference>
<dbReference type="GO" id="GO:0042274">
    <property type="term" value="P:ribosomal small subunit biogenesis"/>
    <property type="evidence" value="ECO:0000250"/>
    <property type="project" value="UniProtKB"/>
</dbReference>
<dbReference type="GO" id="GO:0006412">
    <property type="term" value="P:translation"/>
    <property type="evidence" value="ECO:0000318"/>
    <property type="project" value="GO_Central"/>
</dbReference>
<dbReference type="CDD" id="cd14867">
    <property type="entry name" value="uS7_Eukaryote"/>
    <property type="match status" value="1"/>
</dbReference>
<dbReference type="FunFam" id="1.10.455.10:FF:000003">
    <property type="entry name" value="40S ribosomal protein S5"/>
    <property type="match status" value="1"/>
</dbReference>
<dbReference type="Gene3D" id="1.10.455.10">
    <property type="entry name" value="Ribosomal protein S7 domain"/>
    <property type="match status" value="1"/>
</dbReference>
<dbReference type="InterPro" id="IPR000235">
    <property type="entry name" value="Ribosomal_uS7"/>
</dbReference>
<dbReference type="InterPro" id="IPR020606">
    <property type="entry name" value="Ribosomal_uS7_CS"/>
</dbReference>
<dbReference type="InterPro" id="IPR023798">
    <property type="entry name" value="Ribosomal_uS7_dom"/>
</dbReference>
<dbReference type="InterPro" id="IPR036823">
    <property type="entry name" value="Ribosomal_uS7_dom_sf"/>
</dbReference>
<dbReference type="InterPro" id="IPR005716">
    <property type="entry name" value="Ribosomal_uS7_euk/arc"/>
</dbReference>
<dbReference type="NCBIfam" id="NF003106">
    <property type="entry name" value="PRK04027.1"/>
    <property type="match status" value="1"/>
</dbReference>
<dbReference type="NCBIfam" id="TIGR01028">
    <property type="entry name" value="uS7_euk_arch"/>
    <property type="match status" value="1"/>
</dbReference>
<dbReference type="PANTHER" id="PTHR11205">
    <property type="entry name" value="RIBOSOMAL PROTEIN S7"/>
    <property type="match status" value="1"/>
</dbReference>
<dbReference type="Pfam" id="PF00177">
    <property type="entry name" value="Ribosomal_S7"/>
    <property type="match status" value="1"/>
</dbReference>
<dbReference type="PIRSF" id="PIRSF002122">
    <property type="entry name" value="RPS7p_RPS7a_RPS5e_RPS7o"/>
    <property type="match status" value="1"/>
</dbReference>
<dbReference type="SUPFAM" id="SSF47973">
    <property type="entry name" value="Ribosomal protein S7"/>
    <property type="match status" value="1"/>
</dbReference>
<dbReference type="PROSITE" id="PS00052">
    <property type="entry name" value="RIBOSOMAL_S7"/>
    <property type="match status" value="1"/>
</dbReference>
<proteinExistence type="evidence at transcript level"/>
<organism>
    <name type="scientific">Bos taurus</name>
    <name type="common">Bovine</name>
    <dbReference type="NCBI Taxonomy" id="9913"/>
    <lineage>
        <taxon>Eukaryota</taxon>
        <taxon>Metazoa</taxon>
        <taxon>Chordata</taxon>
        <taxon>Craniata</taxon>
        <taxon>Vertebrata</taxon>
        <taxon>Euteleostomi</taxon>
        <taxon>Mammalia</taxon>
        <taxon>Eutheria</taxon>
        <taxon>Laurasiatheria</taxon>
        <taxon>Artiodactyla</taxon>
        <taxon>Ruminantia</taxon>
        <taxon>Pecora</taxon>
        <taxon>Bovidae</taxon>
        <taxon>Bovinae</taxon>
        <taxon>Bos</taxon>
    </lineage>
</organism>